<gene>
    <name evidence="6" type="primary">glaH</name>
    <name evidence="7" type="synonym">csiD</name>
    <name evidence="5" type="synonym">gab</name>
    <name type="synonym">ygaT</name>
    <name type="ordered locus">b2659</name>
    <name type="ordered locus">JW5427</name>
</gene>
<organism>
    <name type="scientific">Escherichia coli (strain K12)</name>
    <dbReference type="NCBI Taxonomy" id="83333"/>
    <lineage>
        <taxon>Bacteria</taxon>
        <taxon>Pseudomonadati</taxon>
        <taxon>Pseudomonadota</taxon>
        <taxon>Gammaproteobacteria</taxon>
        <taxon>Enterobacterales</taxon>
        <taxon>Enterobacteriaceae</taxon>
        <taxon>Escherichia</taxon>
    </lineage>
</organism>
<sequence>MNALTAVQNNAVDSGQDYSGFTLTPSAQSPRLLELTFTEQTTKQFLEQVAEWPVQALEYKSFLRFRVAKILDDLCANQLQPLLLKTLLNRAEGALLINAVGVDDVKQADEMVKLATAVAHLIGRSNFDAMSGQYYARFVVKNVDNSDSYLRQPHRVMELHNDGTYVEEITDYVLMMKIDEQNMQGGNSLLLHLDDWEHLDNYFRHPLARRPMRFAAPPSKNVSKDVFHPVFDVDQQGRPVMRYIDQFVQPKDFEEGVWLSELSDAIETSKGILSVPVPVGKFLLINNLFWLHGRDRFTPHPDLRRELMRQRGYFAYASNHYQTHQ</sequence>
<name>GLAH_ECOLI</name>
<feature type="chain" id="PRO_0000218177" description="Glutarate 2-hydroxylase">
    <location>
        <begin position="1"/>
        <end position="325"/>
    </location>
</feature>
<feature type="binding site" evidence="1 3 9 10">
    <location>
        <position position="160"/>
    </location>
    <ligand>
        <name>Fe cation</name>
        <dbReference type="ChEBI" id="CHEBI:24875"/>
    </ligand>
</feature>
<feature type="binding site" evidence="1 3 9 10">
    <location>
        <position position="162"/>
    </location>
    <ligand>
        <name>Fe cation</name>
        <dbReference type="ChEBI" id="CHEBI:24875"/>
    </ligand>
</feature>
<feature type="binding site" evidence="1 3 9 10">
    <location>
        <position position="292"/>
    </location>
    <ligand>
        <name>Fe cation</name>
        <dbReference type="ChEBI" id="CHEBI:24875"/>
    </ligand>
</feature>
<feature type="sequence conflict" description="In Ref. 1; AAD10865." evidence="8" ref="1">
    <original>QP</original>
    <variation>HA</variation>
    <location>
        <begin position="152"/>
        <end position="153"/>
    </location>
</feature>
<feature type="sequence conflict" description="In Ref. 1; AAD10865." evidence="8" ref="1">
    <original>MR</original>
    <variation>IA</variation>
    <location>
        <begin position="212"/>
        <end position="213"/>
    </location>
</feature>
<feature type="sequence conflict" description="In Ref. 1; AAD10865." evidence="8" ref="1">
    <original>QR</original>
    <variation>HG</variation>
    <location>
        <begin position="310"/>
        <end position="311"/>
    </location>
</feature>
<feature type="strand" evidence="11">
    <location>
        <begin position="21"/>
        <end position="25"/>
    </location>
</feature>
<feature type="strand" evidence="11">
    <location>
        <begin position="32"/>
        <end position="37"/>
    </location>
</feature>
<feature type="helix" evidence="11">
    <location>
        <begin position="39"/>
        <end position="48"/>
    </location>
</feature>
<feature type="turn" evidence="11">
    <location>
        <begin position="49"/>
        <end position="51"/>
    </location>
</feature>
<feature type="helix" evidence="11">
    <location>
        <begin position="54"/>
        <end position="59"/>
    </location>
</feature>
<feature type="helix" evidence="11">
    <location>
        <begin position="62"/>
        <end position="73"/>
    </location>
</feature>
<feature type="turn" evidence="11">
    <location>
        <begin position="74"/>
        <end position="77"/>
    </location>
</feature>
<feature type="helix" evidence="11">
    <location>
        <begin position="79"/>
        <end position="88"/>
    </location>
</feature>
<feature type="strand" evidence="11">
    <location>
        <begin position="94"/>
        <end position="99"/>
    </location>
</feature>
<feature type="helix" evidence="11">
    <location>
        <begin position="105"/>
        <end position="107"/>
    </location>
</feature>
<feature type="helix" evidence="11">
    <location>
        <begin position="108"/>
        <end position="122"/>
    </location>
</feature>
<feature type="strand" evidence="11">
    <location>
        <begin position="123"/>
        <end position="125"/>
    </location>
</feature>
<feature type="turn" evidence="11">
    <location>
        <begin position="129"/>
        <end position="131"/>
    </location>
</feature>
<feature type="strand" evidence="11">
    <location>
        <begin position="132"/>
        <end position="140"/>
    </location>
</feature>
<feature type="strand" evidence="11">
    <location>
        <begin position="157"/>
        <end position="160"/>
    </location>
</feature>
<feature type="strand" evidence="11">
    <location>
        <begin position="166"/>
        <end position="168"/>
    </location>
</feature>
<feature type="strand" evidence="11">
    <location>
        <begin position="172"/>
        <end position="182"/>
    </location>
</feature>
<feature type="strand" evidence="11">
    <location>
        <begin position="188"/>
        <end position="192"/>
    </location>
</feature>
<feature type="helix" evidence="11">
    <location>
        <begin position="193"/>
        <end position="195"/>
    </location>
</feature>
<feature type="helix" evidence="11">
    <location>
        <begin position="199"/>
        <end position="203"/>
    </location>
</feature>
<feature type="helix" evidence="11">
    <location>
        <begin position="206"/>
        <end position="209"/>
    </location>
</feature>
<feature type="strand" evidence="11">
    <location>
        <begin position="212"/>
        <end position="214"/>
    </location>
</feature>
<feature type="strand" evidence="11">
    <location>
        <begin position="226"/>
        <end position="228"/>
    </location>
</feature>
<feature type="strand" evidence="11">
    <location>
        <begin position="230"/>
        <end position="233"/>
    </location>
</feature>
<feature type="strand" evidence="11">
    <location>
        <begin position="239"/>
        <end position="241"/>
    </location>
</feature>
<feature type="turn" evidence="11">
    <location>
        <begin position="245"/>
        <end position="247"/>
    </location>
</feature>
<feature type="helix" evidence="11">
    <location>
        <begin position="253"/>
        <end position="267"/>
    </location>
</feature>
<feature type="strand" evidence="11">
    <location>
        <begin position="273"/>
        <end position="275"/>
    </location>
</feature>
<feature type="strand" evidence="11">
    <location>
        <begin position="282"/>
        <end position="286"/>
    </location>
</feature>
<feature type="turn" evidence="11">
    <location>
        <begin position="287"/>
        <end position="289"/>
    </location>
</feature>
<feature type="strand" evidence="11">
    <location>
        <begin position="290"/>
        <end position="294"/>
    </location>
</feature>
<feature type="strand" evidence="11">
    <location>
        <begin position="304"/>
        <end position="314"/>
    </location>
</feature>
<keyword id="KW-0002">3D-structure</keyword>
<keyword id="KW-0223">Dioxygenase</keyword>
<keyword id="KW-0903">Direct protein sequencing</keyword>
<keyword id="KW-0408">Iron</keyword>
<keyword id="KW-0479">Metal-binding</keyword>
<keyword id="KW-0560">Oxidoreductase</keyword>
<keyword id="KW-1185">Reference proteome</keyword>
<reference key="1">
    <citation type="submission" date="1996-08" db="EMBL/GenBank/DDBJ databases">
        <title>The involvement of the gabC locus in the control of utilization of gama-aminobutyric acid in E.coli K-12.</title>
        <authorList>
            <person name="Diab K."/>
            <person name="Metzer E."/>
            <person name="Halpern Y.S."/>
        </authorList>
    </citation>
    <scope>NUCLEOTIDE SEQUENCE [GENOMIC DNA]</scope>
    <source>
        <strain>K12 / CS101</strain>
    </source>
</reference>
<reference key="2">
    <citation type="journal article" date="1997" name="Science">
        <title>The complete genome sequence of Escherichia coli K-12.</title>
        <authorList>
            <person name="Blattner F.R."/>
            <person name="Plunkett G. III"/>
            <person name="Bloch C.A."/>
            <person name="Perna N.T."/>
            <person name="Burland V."/>
            <person name="Riley M."/>
            <person name="Collado-Vides J."/>
            <person name="Glasner J.D."/>
            <person name="Rode C.K."/>
            <person name="Mayhew G.F."/>
            <person name="Gregor J."/>
            <person name="Davis N.W."/>
            <person name="Kirkpatrick H.A."/>
            <person name="Goeden M.A."/>
            <person name="Rose D.J."/>
            <person name="Mau B."/>
            <person name="Shao Y."/>
        </authorList>
    </citation>
    <scope>NUCLEOTIDE SEQUENCE [LARGE SCALE GENOMIC DNA]</scope>
    <source>
        <strain>K12 / MG1655 / ATCC 47076</strain>
    </source>
</reference>
<reference key="3">
    <citation type="journal article" date="2006" name="Mol. Syst. Biol.">
        <title>Highly accurate genome sequences of Escherichia coli K-12 strains MG1655 and W3110.</title>
        <authorList>
            <person name="Hayashi K."/>
            <person name="Morooka N."/>
            <person name="Yamamoto Y."/>
            <person name="Fujita K."/>
            <person name="Isono K."/>
            <person name="Choi S."/>
            <person name="Ohtsubo E."/>
            <person name="Baba T."/>
            <person name="Wanner B.L."/>
            <person name="Mori H."/>
            <person name="Horiuchi T."/>
        </authorList>
    </citation>
    <scope>NUCLEOTIDE SEQUENCE [LARGE SCALE GENOMIC DNA]</scope>
    <source>
        <strain>K12 / W3110 / ATCC 27325 / DSM 5911</strain>
    </source>
</reference>
<reference key="4">
    <citation type="journal article" date="1998" name="J. Mol. Biol.">
        <title>Molecular analysis of the regulation of csiD, a carbon starvation-inducible gene in Escherichia coli that is exclusively dependent on sigma s and requires activation by cAMP-CRP.</title>
        <authorList>
            <person name="Marschall C."/>
            <person name="Labrousse V."/>
            <person name="Kreimer M."/>
            <person name="Weichart D."/>
            <person name="Kolb A."/>
            <person name="Hengge-Aronis R."/>
        </authorList>
    </citation>
    <scope>TRANSCRIPTIONAL REGULATION</scope>
    <scope>PROTEIN SEQUENCE OF N-TERMINUS</scope>
</reference>
<reference key="5">
    <citation type="journal article" date="2004" name="Mol. Microbiol.">
        <title>Multiple stress signal integration in the regulation of the complex sigma S-dependent csiD-ygaF-gabDTP operon in Escherichia coli.</title>
        <authorList>
            <person name="Metzner M."/>
            <person name="Germer J."/>
            <person name="Hengge R."/>
        </authorList>
    </citation>
    <scope>INDUCTION</scope>
    <source>
        <strain>K12 / MC4100 / ATCC 35695 / DSM 6574</strain>
    </source>
</reference>
<reference key="6">
    <citation type="journal article" date="2002" name="Protein Sci.">
        <title>Structural genomics: a pipeline for providing structures for the biologist.</title>
        <authorList>
            <person name="Chance M.R."/>
            <person name="Bresnick A.R."/>
            <person name="Burley S.K."/>
            <person name="Jiang J.-S."/>
            <person name="Lima C.D."/>
            <person name="Sali A."/>
            <person name="Almo S.C."/>
            <person name="Bonanno J.B."/>
            <person name="Buglino J.A."/>
            <person name="Boulton S."/>
            <person name="Chen H."/>
            <person name="Eswar N."/>
            <person name="He G."/>
            <person name="Huang R."/>
            <person name="Ilyin V."/>
            <person name="McMahan L."/>
            <person name="Pieper U."/>
            <person name="Ray S."/>
            <person name="Vidal M."/>
            <person name="Wang L.K."/>
        </authorList>
    </citation>
    <scope>X-RAY CRYSTALLOGRAPHY (2.0 ANGSTROMS) OF 15-325 IN COMPLEX WITH IRON</scope>
    <scope>COFACTOR</scope>
    <scope>SUBUNIT</scope>
</reference>
<reference key="7">
    <citation type="journal article" date="2018" name="Nat. Commun.">
        <title>Widespread bacterial lysine degradation proceeding via glutarate and L-2-hydroxyglutarate.</title>
        <authorList>
            <person name="Knorr S."/>
            <person name="Sinn M."/>
            <person name="Galetskiy D."/>
            <person name="Williams R.M."/>
            <person name="Wang C."/>
            <person name="Mueller N."/>
            <person name="Mayans O."/>
            <person name="Schleheck D."/>
            <person name="Hartig J.S."/>
        </authorList>
    </citation>
    <scope>X-RAY CRYSTALLOGRAPHY (2.20 ANGSTROMS) IN COMPLEXES WITH IRON; GLUTARATE; SUCCINATE AND THE INHIBITOR N-OXALYLGLYCINE</scope>
    <scope>FUNCTION</scope>
    <scope>CATALYTIC ACTIVITY</scope>
    <scope>SUBSTRATE SPECIFICITY</scope>
    <scope>COFACTOR</scope>
    <scope>BIOPHYSICOCHEMICAL PROPERTIES</scope>
    <scope>DISRUPTION PHENOTYPE</scope>
    <scope>PATHWAY</scope>
    <source>
        <strain>K12 / BW25113</strain>
    </source>
</reference>
<accession>P76621</accession>
<accession>Q2MAC7</accession>
<accession>Q9ZAZ9</accession>
<evidence type="ECO:0000269" key="1">
    <source>
    </source>
</evidence>
<evidence type="ECO:0000269" key="2">
    <source>
    </source>
</evidence>
<evidence type="ECO:0000269" key="3">
    <source>
    </source>
</evidence>
<evidence type="ECO:0000269" key="4">
    <source>
    </source>
</evidence>
<evidence type="ECO:0000303" key="5">
    <source>
    </source>
</evidence>
<evidence type="ECO:0000303" key="6">
    <source>
    </source>
</evidence>
<evidence type="ECO:0000303" key="7">
    <source>
    </source>
</evidence>
<evidence type="ECO:0000305" key="8"/>
<evidence type="ECO:0000312" key="9">
    <source>
        <dbReference type="PDB" id="1JR7"/>
    </source>
</evidence>
<evidence type="ECO:0000312" key="10">
    <source>
        <dbReference type="PDB" id="6GPE"/>
    </source>
</evidence>
<evidence type="ECO:0007829" key="11">
    <source>
        <dbReference type="PDB" id="8CDF"/>
    </source>
</evidence>
<dbReference type="EC" id="1.14.11.64" evidence="3"/>
<dbReference type="EMBL" id="U68243">
    <property type="protein sequence ID" value="AAD10865.1"/>
    <property type="status" value="ALT_INIT"/>
    <property type="molecule type" value="Genomic_DNA"/>
</dbReference>
<dbReference type="EMBL" id="U00096">
    <property type="protein sequence ID" value="AAC75706.2"/>
    <property type="molecule type" value="Genomic_DNA"/>
</dbReference>
<dbReference type="EMBL" id="AP009048">
    <property type="protein sequence ID" value="BAE76779.1"/>
    <property type="molecule type" value="Genomic_DNA"/>
</dbReference>
<dbReference type="PIR" id="D65045">
    <property type="entry name" value="D65045"/>
</dbReference>
<dbReference type="RefSeq" id="NP_417145.4">
    <property type="nucleotide sequence ID" value="NC_000913.3"/>
</dbReference>
<dbReference type="RefSeq" id="WP_000993126.1">
    <property type="nucleotide sequence ID" value="NZ_LN832404.1"/>
</dbReference>
<dbReference type="PDB" id="1JR7">
    <property type="method" value="X-ray"/>
    <property type="resolution" value="2.00 A"/>
    <property type="chains" value="A=15-325"/>
</dbReference>
<dbReference type="PDB" id="6GPE">
    <property type="method" value="X-ray"/>
    <property type="resolution" value="2.20 A"/>
    <property type="chains" value="A/B=1-325"/>
</dbReference>
<dbReference type="PDB" id="6GPN">
    <property type="method" value="X-ray"/>
    <property type="resolution" value="2.20 A"/>
    <property type="chains" value="A/B=1-325"/>
</dbReference>
<dbReference type="PDB" id="6HL8">
    <property type="method" value="X-ray"/>
    <property type="resolution" value="2.40 A"/>
    <property type="chains" value="A/B=1-325"/>
</dbReference>
<dbReference type="PDB" id="6HL9">
    <property type="method" value="X-ray"/>
    <property type="resolution" value="2.30 A"/>
    <property type="chains" value="A/B=1-325"/>
</dbReference>
<dbReference type="PDB" id="8CDF">
    <property type="method" value="X-ray"/>
    <property type="resolution" value="1.77 A"/>
    <property type="chains" value="A=15-325"/>
</dbReference>
<dbReference type="PDBsum" id="1JR7"/>
<dbReference type="PDBsum" id="6GPE"/>
<dbReference type="PDBsum" id="6GPN"/>
<dbReference type="PDBsum" id="6HL8"/>
<dbReference type="PDBsum" id="6HL9"/>
<dbReference type="PDBsum" id="8CDF"/>
<dbReference type="SMR" id="P76621"/>
<dbReference type="BioGRID" id="4259208">
    <property type="interactions" value="11"/>
</dbReference>
<dbReference type="FunCoup" id="P76621">
    <property type="interactions" value="87"/>
</dbReference>
<dbReference type="STRING" id="511145.b2659"/>
<dbReference type="jPOST" id="P76621"/>
<dbReference type="PaxDb" id="511145-b2659"/>
<dbReference type="EnsemblBacteria" id="AAC75706">
    <property type="protein sequence ID" value="AAC75706"/>
    <property type="gene ID" value="b2659"/>
</dbReference>
<dbReference type="GeneID" id="948076"/>
<dbReference type="KEGG" id="ecj:JW5427"/>
<dbReference type="KEGG" id="eco:b2659"/>
<dbReference type="KEGG" id="ecoc:C3026_14660"/>
<dbReference type="PATRIC" id="fig|1411691.4.peg.4082"/>
<dbReference type="EchoBASE" id="EB3295"/>
<dbReference type="eggNOG" id="ENOG502Z8GB">
    <property type="taxonomic scope" value="Bacteria"/>
</dbReference>
<dbReference type="HOGENOM" id="CLU_075277_0_0_6"/>
<dbReference type="InParanoid" id="P76621"/>
<dbReference type="OMA" id="RREMRWT"/>
<dbReference type="OrthoDB" id="8954293at2"/>
<dbReference type="PhylomeDB" id="P76621"/>
<dbReference type="BioCyc" id="EcoCyc:G7394-MONOMER"/>
<dbReference type="BioCyc" id="MetaCyc:G7394-MONOMER"/>
<dbReference type="BRENDA" id="1.14.11.64">
    <property type="organism ID" value="2026"/>
</dbReference>
<dbReference type="EvolutionaryTrace" id="P76621"/>
<dbReference type="PRO" id="PR:P76621"/>
<dbReference type="Proteomes" id="UP000000625">
    <property type="component" value="Chromosome"/>
</dbReference>
<dbReference type="GO" id="GO:0032991">
    <property type="term" value="C:protein-containing complex"/>
    <property type="evidence" value="ECO:0000314"/>
    <property type="project" value="EcoCyc"/>
</dbReference>
<dbReference type="GO" id="GO:0008198">
    <property type="term" value="F:ferrous iron binding"/>
    <property type="evidence" value="ECO:0000314"/>
    <property type="project" value="UniProtKB"/>
</dbReference>
<dbReference type="GO" id="GO:0106343">
    <property type="term" value="F:glutarate dioxygenase activity"/>
    <property type="evidence" value="ECO:0000314"/>
    <property type="project" value="EcoCyc"/>
</dbReference>
<dbReference type="GO" id="GO:0042802">
    <property type="term" value="F:identical protein binding"/>
    <property type="evidence" value="ECO:0000314"/>
    <property type="project" value="EcoCyc"/>
</dbReference>
<dbReference type="GO" id="GO:0005506">
    <property type="term" value="F:iron ion binding"/>
    <property type="evidence" value="ECO:0000314"/>
    <property type="project" value="EcoCyc"/>
</dbReference>
<dbReference type="GO" id="GO:0050498">
    <property type="term" value="F:oxidoreductase activity, acting on paired donors, with incorporation or reduction of molecular oxygen, with 2-oxoglutarate as one donor, and the other dehydrogenated"/>
    <property type="evidence" value="ECO:0000314"/>
    <property type="project" value="UniProtKB"/>
</dbReference>
<dbReference type="GO" id="GO:0019477">
    <property type="term" value="P:L-lysine catabolic process"/>
    <property type="evidence" value="ECO:0000314"/>
    <property type="project" value="UniProtKB"/>
</dbReference>
<dbReference type="GO" id="GO:0090549">
    <property type="term" value="P:response to carbon starvation"/>
    <property type="evidence" value="ECO:0000270"/>
    <property type="project" value="EcoCyc"/>
</dbReference>
<dbReference type="CDD" id="cd00250">
    <property type="entry name" value="CAS_like"/>
    <property type="match status" value="1"/>
</dbReference>
<dbReference type="FunFam" id="3.60.130.10:FF:000004">
    <property type="entry name" value="Glutarate 2-hydroxylase"/>
    <property type="match status" value="1"/>
</dbReference>
<dbReference type="Gene3D" id="3.60.130.10">
    <property type="entry name" value="Clavaminate synthase-like"/>
    <property type="match status" value="1"/>
</dbReference>
<dbReference type="HAMAP" id="MF_01083">
    <property type="entry name" value="glutarate_hydroxylase"/>
    <property type="match status" value="1"/>
</dbReference>
<dbReference type="InterPro" id="IPR050411">
    <property type="entry name" value="AlphaKG_dependent_hydroxylases"/>
</dbReference>
<dbReference type="InterPro" id="IPR015038">
    <property type="entry name" value="GlaH"/>
</dbReference>
<dbReference type="InterPro" id="IPR042098">
    <property type="entry name" value="TauD-like_sf"/>
</dbReference>
<dbReference type="NCBIfam" id="NF002814">
    <property type="entry name" value="PRK02963.1"/>
    <property type="match status" value="1"/>
</dbReference>
<dbReference type="PANTHER" id="PTHR10696">
    <property type="entry name" value="GAMMA-BUTYROBETAINE HYDROXYLASE-RELATED"/>
    <property type="match status" value="1"/>
</dbReference>
<dbReference type="PANTHER" id="PTHR10696:SF56">
    <property type="entry name" value="TAUD_TFDA-LIKE DOMAIN-CONTAINING PROTEIN"/>
    <property type="match status" value="1"/>
</dbReference>
<dbReference type="Pfam" id="PF08943">
    <property type="entry name" value="CsiD"/>
    <property type="match status" value="1"/>
</dbReference>
<dbReference type="SUPFAM" id="SSF51197">
    <property type="entry name" value="Clavaminate synthase-like"/>
    <property type="match status" value="1"/>
</dbReference>
<proteinExistence type="evidence at protein level"/>
<comment type="function">
    <text evidence="3">Acts as an alpha-ketoglutarate-dependent dioxygenase catalyzing hydroxylation of glutarate (GA) to L-2-hydroxyglutarate (L2HG) in the stationary phase of E.coli. Functions in a L-lysine degradation pathway that proceeds via cadaverine, glutarate and L-2-hydroxyglutarate. Other dicarboxylic acids (oxalate, malonate, succinate, adipate, and pimelate) are not substrates for this enzyme.</text>
</comment>
<comment type="catalytic activity">
    <reaction evidence="3">
        <text>glutarate + 2-oxoglutarate + O2 = (S)-2-hydroxyglutarate + succinate + CO2</text>
        <dbReference type="Rhea" id="RHEA:13821"/>
        <dbReference type="ChEBI" id="CHEBI:15379"/>
        <dbReference type="ChEBI" id="CHEBI:16526"/>
        <dbReference type="ChEBI" id="CHEBI:16782"/>
        <dbReference type="ChEBI" id="CHEBI:16810"/>
        <dbReference type="ChEBI" id="CHEBI:30031"/>
        <dbReference type="ChEBI" id="CHEBI:30921"/>
        <dbReference type="EC" id="1.14.11.64"/>
    </reaction>
    <physiologicalReaction direction="left-to-right" evidence="3">
        <dbReference type="Rhea" id="RHEA:13822"/>
    </physiologicalReaction>
</comment>
<comment type="cofactor">
    <cofactor evidence="1 3">
        <name>Fe(2+)</name>
        <dbReference type="ChEBI" id="CHEBI:29033"/>
    </cofactor>
    <text evidence="1 3">Binds 1 Fe(2+) ion per subunit.</text>
</comment>
<comment type="biophysicochemical properties">
    <kinetics>
        <KM evidence="3">650 uM for glutarate</KM>
        <KM evidence="3">100 uM for 2-oxoglutarate</KM>
    </kinetics>
</comment>
<comment type="pathway">
    <text evidence="3">Amino-acid degradation.</text>
</comment>
<comment type="subunit">
    <text evidence="1">Homotetramer.</text>
</comment>
<comment type="induction">
    <text evidence="2 4">Expression is induced by RpoS during carbon starvation and at stationary phase. Is also regulated by cAMP-CRP and Lrp, which play the roles of a nearly essential activator and of a positive modulator, respectively. Repressed by CsiR. Makes part of the operon glaH-lhgD-gabDTP.</text>
</comment>
<comment type="disruption phenotype">
    <text evidence="3">Cells lacking this gene accumulate higher levels of glutarate than wild-type during carbon starvation and entry into the stationary phase.</text>
</comment>
<comment type="similarity">
    <text evidence="8">Belongs to the glutarate hydroxylase family.</text>
</comment>
<comment type="sequence caution" evidence="8">
    <conflict type="erroneous initiation">
        <sequence resource="EMBL-CDS" id="AAD10865"/>
    </conflict>
    <text>Extended N-terminus.</text>
</comment>
<protein>
    <recommendedName>
        <fullName evidence="6">Glutarate 2-hydroxylase</fullName>
        <shortName evidence="6">G-2-H</shortName>
        <ecNumber evidence="3">1.14.11.64</ecNumber>
    </recommendedName>
    <alternativeName>
        <fullName evidence="7">Carbon starvation induced protein D</fullName>
    </alternativeName>
</protein>